<reference key="1">
    <citation type="journal article" date="1990" name="J. Virol.">
        <title>Evolution of the nucleoprotein gene of influenza A virus.</title>
        <authorList>
            <person name="Gorman O.T."/>
            <person name="Bean W.J."/>
            <person name="Kawaoka Y."/>
            <person name="Webster R.G."/>
        </authorList>
    </citation>
    <scope>NUCLEOTIDE SEQUENCE [GENOMIC RNA]</scope>
</reference>
<reference key="2">
    <citation type="journal article" date="2006" name="Science">
        <title>Large-scale sequence analysis of avian influenza isolates.</title>
        <authorList>
            <person name="Obenauer J.C."/>
            <person name="Denson J."/>
            <person name="Mehta P.K."/>
            <person name="Su X."/>
            <person name="Mukatira S."/>
            <person name="Finkelstein D.B."/>
            <person name="Xu X."/>
            <person name="Wang J."/>
            <person name="Ma J."/>
            <person name="Fan Y."/>
            <person name="Rakestraw K.M."/>
            <person name="Webster R.G."/>
            <person name="Hoffmann E."/>
            <person name="Krauss S."/>
            <person name="Zheng J."/>
            <person name="Zhang Z."/>
            <person name="Naeve C.W."/>
        </authorList>
    </citation>
    <scope>NUCLEOTIDE SEQUENCE [GENOMIC RNA]</scope>
</reference>
<organism>
    <name type="scientific">Influenza A virus (strain A/Grey teal/Australia/2/1979 H4N4)</name>
    <dbReference type="NCBI Taxonomy" id="402464"/>
    <lineage>
        <taxon>Viruses</taxon>
        <taxon>Riboviria</taxon>
        <taxon>Orthornavirae</taxon>
        <taxon>Negarnaviricota</taxon>
        <taxon>Polyploviricotina</taxon>
        <taxon>Insthoviricetes</taxon>
        <taxon>Articulavirales</taxon>
        <taxon>Orthomyxoviridae</taxon>
        <taxon>Alphainfluenzavirus</taxon>
        <taxon>Alphainfluenzavirus influenzae</taxon>
        <taxon>Influenza A virus</taxon>
    </lineage>
</organism>
<evidence type="ECO:0000255" key="1">
    <source>
        <dbReference type="HAMAP-Rule" id="MF_04070"/>
    </source>
</evidence>
<evidence type="ECO:0000256" key="2">
    <source>
        <dbReference type="SAM" id="MobiDB-lite"/>
    </source>
</evidence>
<dbReference type="EMBL" id="M30761">
    <property type="protein sequence ID" value="AAA43482.1"/>
    <property type="molecule type" value="Genomic_RNA"/>
</dbReference>
<dbReference type="EMBL" id="CY005674">
    <property type="protein sequence ID" value="ABB20365.1"/>
    <property type="molecule type" value="Genomic_RNA"/>
</dbReference>
<dbReference type="SMR" id="P15671"/>
<dbReference type="PRO" id="PR:P15671"/>
<dbReference type="Proteomes" id="UP000008575">
    <property type="component" value="Genome"/>
</dbReference>
<dbReference type="GO" id="GO:0019029">
    <property type="term" value="C:helical viral capsid"/>
    <property type="evidence" value="ECO:0007669"/>
    <property type="project" value="UniProtKB-UniRule"/>
</dbReference>
<dbReference type="GO" id="GO:0043657">
    <property type="term" value="C:host cell"/>
    <property type="evidence" value="ECO:0007669"/>
    <property type="project" value="GOC"/>
</dbReference>
<dbReference type="GO" id="GO:0042025">
    <property type="term" value="C:host cell nucleus"/>
    <property type="evidence" value="ECO:0007669"/>
    <property type="project" value="UniProtKB-SubCell"/>
</dbReference>
<dbReference type="GO" id="GO:1990904">
    <property type="term" value="C:ribonucleoprotein complex"/>
    <property type="evidence" value="ECO:0007669"/>
    <property type="project" value="UniProtKB-KW"/>
</dbReference>
<dbReference type="GO" id="GO:0019013">
    <property type="term" value="C:viral nucleocapsid"/>
    <property type="evidence" value="ECO:0007669"/>
    <property type="project" value="UniProtKB-UniRule"/>
</dbReference>
<dbReference type="GO" id="GO:0003723">
    <property type="term" value="F:RNA binding"/>
    <property type="evidence" value="ECO:0007669"/>
    <property type="project" value="UniProtKB-UniRule"/>
</dbReference>
<dbReference type="GO" id="GO:0005198">
    <property type="term" value="F:structural molecule activity"/>
    <property type="evidence" value="ECO:0007669"/>
    <property type="project" value="UniProtKB-UniRule"/>
</dbReference>
<dbReference type="GO" id="GO:0046718">
    <property type="term" value="P:symbiont entry into host cell"/>
    <property type="evidence" value="ECO:0007669"/>
    <property type="project" value="UniProtKB-KW"/>
</dbReference>
<dbReference type="GO" id="GO:0075732">
    <property type="term" value="P:viral penetration into host nucleus"/>
    <property type="evidence" value="ECO:0007669"/>
    <property type="project" value="UniProtKB-UniRule"/>
</dbReference>
<dbReference type="HAMAP" id="MF_04070">
    <property type="entry name" value="INFV_NCAP"/>
    <property type="match status" value="1"/>
</dbReference>
<dbReference type="InterPro" id="IPR002141">
    <property type="entry name" value="Flu_NP"/>
</dbReference>
<dbReference type="Pfam" id="PF00506">
    <property type="entry name" value="Flu_NP"/>
    <property type="match status" value="1"/>
</dbReference>
<dbReference type="SUPFAM" id="SSF161003">
    <property type="entry name" value="flu NP-like"/>
    <property type="match status" value="1"/>
</dbReference>
<protein>
    <recommendedName>
        <fullName evidence="1">Nucleoprotein</fullName>
    </recommendedName>
    <alternativeName>
        <fullName evidence="1">Nucleocapsid protein</fullName>
        <shortName evidence="1">Protein N</shortName>
    </alternativeName>
</protein>
<keyword id="KW-0167">Capsid protein</keyword>
<keyword id="KW-1139">Helical capsid protein</keyword>
<keyword id="KW-1048">Host nucleus</keyword>
<keyword id="KW-0945">Host-virus interaction</keyword>
<keyword id="KW-0687">Ribonucleoprotein</keyword>
<keyword id="KW-0694">RNA-binding</keyword>
<keyword id="KW-0543">Viral nucleoprotein</keyword>
<keyword id="KW-1163">Viral penetration into host nucleus</keyword>
<keyword id="KW-0946">Virion</keyword>
<keyword id="KW-1160">Virus entry into host cell</keyword>
<gene>
    <name evidence="1" type="primary">NP</name>
</gene>
<feature type="chain" id="PRO_0000079051" description="Nucleoprotein">
    <location>
        <begin position="1"/>
        <end position="498"/>
    </location>
</feature>
<feature type="region of interest" description="Disordered" evidence="2">
    <location>
        <begin position="1"/>
        <end position="22"/>
    </location>
</feature>
<feature type="short sequence motif" description="Unconventional nuclear localization signal" evidence="1">
    <location>
        <begin position="1"/>
        <end position="18"/>
    </location>
</feature>
<feature type="short sequence motif" description="Bipartite nuclear localization signal" evidence="1">
    <location>
        <begin position="198"/>
        <end position="216"/>
    </location>
</feature>
<feature type="sequence conflict" description="In Ref. 1; AAA43482." ref="1">
    <original>L</original>
    <variation>M</variation>
    <location>
        <position position="306"/>
    </location>
</feature>
<proteinExistence type="inferred from homology"/>
<name>NCAP_I79A7</name>
<comment type="function">
    <text evidence="1">Encapsidates the negative strand viral RNA, protecting it from nucleases. The encapsidated genomic RNA is termed the ribonucleoprotein (RNP) and serves as template for transcription and replication. The RNP needs to be localized in the host nucleus to start an infectious cycle, but is too large to diffuse through the nuclear pore complex. NP comprises at least 2 nuclear localization signals that are responsible for the active RNP import into the nucleus through cellular importin alpha/beta pathway. Later in the infection, nclear export of RNPs are mediated through viral proteins NEP interacting with M1 which binds nucleoproteins. It is possible that nucleoprotein binds directly host exportin-1/XPO1 and plays an active role in RNPs nuclear export. M1 interaction with RNP seems to hide nucleoprotein's nuclear localization signals. Soon after a virion infects a new cell, M1 dissociates from the RNP under acidification of the virion driven by M2 protein. Dissociation of M1 from RNP unmasks nucleoprotein's nuclear localization signals, targeting the RNP to the nucleus.</text>
</comment>
<comment type="subunit">
    <text evidence="1">Homomultimerizes to form the nucleocapsid. May bind host exportin-1/XPO1. Binds to viral genomic RNA. Protein-RNA contacts are mediated by a combination of electrostatic interactions between positively charged residues and the phosphate backbone and planar interactions between aromatic side chains and bases.</text>
</comment>
<comment type="subcellular location">
    <subcellularLocation>
        <location evidence="1">Virion</location>
    </subcellularLocation>
    <subcellularLocation>
        <location evidence="1">Host nucleus</location>
    </subcellularLocation>
</comment>
<comment type="PTM">
    <text evidence="1">Late in virus-infected cells, may be cleaved from a 56-kDa protein to a 53-kDa protein by a cellular caspase. This cleavage might be a marker for the onset of apoptosis in infected cells or have a specific function in virus host interaction.</text>
</comment>
<comment type="similarity">
    <text evidence="1">Belongs to the influenza viruses nucleoprotein family.</text>
</comment>
<sequence>MASQGTKRSYEQMETGGERQNATEIRSSVGRMVGGIGRFYIQMCTEFKLSDYEGRLIQNSITIERMVLSAFDERRNKYLEEHPSAGKDPKKTGGPIYRRRDGKWIRELILCDKEEIRRIWRQANNGEDATAGLTHLMIWHSNLNDATYQRTRALVRTGMDPRMCSLMQGSTLPRRSGAAGAAVKGVGTMVMELIRMIKRGINDRNFWRGENGRRTRIAYERMCNILKGKFQTAAQRAMMDQVRESRNPGNAEIEDLIFLARSALILRGSVAHKSCLPACVYGLAVASGYDFEKEGYSLVGIDPFRLLQNSQVFSLIRPNENSAHKSQLVWMACHSAAFEDLRVSSFIRGTKVVPRGKLSTRGVQIASNENMETMDSTTLELRSRYWAIRTRSGGNTNQQRASAGQISVQPTFSVQRNLPFERATIMAAFTGNTEGRTSDMRTEIIRMMESARPEDVSFQGRGVFELSDEKATNPIVPSFDMSNEGSYFFGDNAEEYDN</sequence>
<organismHost>
    <name type="scientific">Aves</name>
    <dbReference type="NCBI Taxonomy" id="8782"/>
</organismHost>
<accession>P15671</accession>
<accession>Q20PM0</accession>